<feature type="chain" id="PRO_0000310232" description="ATP-dependent rRNA helicase rrp3">
    <location>
        <begin position="1"/>
        <end position="482"/>
    </location>
</feature>
<feature type="domain" description="Helicase ATP-binding" evidence="2">
    <location>
        <begin position="87"/>
        <end position="258"/>
    </location>
</feature>
<feature type="domain" description="Helicase C-terminal" evidence="3">
    <location>
        <begin position="282"/>
        <end position="430"/>
    </location>
</feature>
<feature type="region of interest" description="Disordered" evidence="4">
    <location>
        <begin position="1"/>
        <end position="55"/>
    </location>
</feature>
<feature type="region of interest" description="Disordered" evidence="4">
    <location>
        <begin position="444"/>
        <end position="482"/>
    </location>
</feature>
<feature type="short sequence motif" description="Q motif" evidence="5">
    <location>
        <begin position="56"/>
        <end position="84"/>
    </location>
</feature>
<feature type="short sequence motif" description="DEAD box" evidence="5">
    <location>
        <begin position="206"/>
        <end position="209"/>
    </location>
</feature>
<feature type="compositionally biased region" description="Acidic residues" evidence="4">
    <location>
        <begin position="44"/>
        <end position="53"/>
    </location>
</feature>
<feature type="compositionally biased region" description="Basic and acidic residues" evidence="4">
    <location>
        <begin position="444"/>
        <end position="456"/>
    </location>
</feature>
<feature type="compositionally biased region" description="Basic and acidic residues" evidence="4">
    <location>
        <begin position="472"/>
        <end position="482"/>
    </location>
</feature>
<feature type="binding site" evidence="2">
    <location>
        <begin position="100"/>
        <end position="107"/>
    </location>
    <ligand>
        <name>ATP</name>
        <dbReference type="ChEBI" id="CHEBI:30616"/>
    </ligand>
</feature>
<comment type="function">
    <text evidence="1">ATP-dependent rRNA helicase required for pre-ribosomal RNA processing. Involved in the maturation of the 35S-pre-rRNA and to its cleavage to mature 18S rRNA.</text>
</comment>
<comment type="catalytic activity">
    <reaction evidence="1">
        <text>ATP + H2O = ADP + phosphate + H(+)</text>
        <dbReference type="Rhea" id="RHEA:13065"/>
        <dbReference type="ChEBI" id="CHEBI:15377"/>
        <dbReference type="ChEBI" id="CHEBI:15378"/>
        <dbReference type="ChEBI" id="CHEBI:30616"/>
        <dbReference type="ChEBI" id="CHEBI:43474"/>
        <dbReference type="ChEBI" id="CHEBI:456216"/>
        <dbReference type="EC" id="3.6.4.13"/>
    </reaction>
</comment>
<comment type="subunit">
    <text evidence="1">Interacts with the SSU processome.</text>
</comment>
<comment type="subcellular location">
    <subcellularLocation>
        <location evidence="5">Nucleus</location>
    </subcellularLocation>
</comment>
<comment type="domain">
    <text evidence="5">The Q motif is unique to and characteristic of the DEAD box family of RNA helicases and controls ATP binding and hydrolysis.</text>
</comment>
<comment type="similarity">
    <text evidence="5">Belongs to the DEAD box helicase family. DDX47/RRP3 subfamily.</text>
</comment>
<sequence>MSSVKRRKTEKNTSSGLKSKQAKEPKEASPLSSPEPTEENQNNEIEEGTEEEEVTKSFKDLGIVDSLCEACDTLGYKAPTPIQRESIPLALQGRDLIGLAETGSGKTAAFALPILQSLLDKPQPLFGLVLAPTRELAYQISQSFEALGSIIRVKCAVIVGGMDMVPQAIALGKKPHIIVATPGRLLDHLENTKGFSLRSLKYLVMDEADRLLDLDFGPILDKILKVLPRERRTYLFSATISSKVESLQRASLKDPLRVSISSNKYQTVSTLIQNYIFIPLVHKDTYLIYLLNEFAGQSAIIFTRTVNETQRIAILLRTLGFGAIPLHGQLSQSSRLGALNKFRAGSREILVATDVAARGLDIPSVDVVLNYDMPQDSKTYIHRVGRTARAGKSGHAISFVTQYDVEIWMRIEAALGKKQEEYQTVKDEVMVFKPRVEEAQRHARNEMKNLHEDRGKKGAVLKGRRPANGAKRGRDEMDREEG</sequence>
<name>RRP3_SCLS1</name>
<reference key="1">
    <citation type="journal article" date="2011" name="PLoS Genet.">
        <title>Genomic analysis of the necrotrophic fungal pathogens Sclerotinia sclerotiorum and Botrytis cinerea.</title>
        <authorList>
            <person name="Amselem J."/>
            <person name="Cuomo C.A."/>
            <person name="van Kan J.A.L."/>
            <person name="Viaud M."/>
            <person name="Benito E.P."/>
            <person name="Couloux A."/>
            <person name="Coutinho P.M."/>
            <person name="de Vries R.P."/>
            <person name="Dyer P.S."/>
            <person name="Fillinger S."/>
            <person name="Fournier E."/>
            <person name="Gout L."/>
            <person name="Hahn M."/>
            <person name="Kohn L."/>
            <person name="Lapalu N."/>
            <person name="Plummer K.M."/>
            <person name="Pradier J.-M."/>
            <person name="Quevillon E."/>
            <person name="Sharon A."/>
            <person name="Simon A."/>
            <person name="ten Have A."/>
            <person name="Tudzynski B."/>
            <person name="Tudzynski P."/>
            <person name="Wincker P."/>
            <person name="Andrew M."/>
            <person name="Anthouard V."/>
            <person name="Beever R.E."/>
            <person name="Beffa R."/>
            <person name="Benoit I."/>
            <person name="Bouzid O."/>
            <person name="Brault B."/>
            <person name="Chen Z."/>
            <person name="Choquer M."/>
            <person name="Collemare J."/>
            <person name="Cotton P."/>
            <person name="Danchin E.G."/>
            <person name="Da Silva C."/>
            <person name="Gautier A."/>
            <person name="Giraud C."/>
            <person name="Giraud T."/>
            <person name="Gonzalez C."/>
            <person name="Grossetete S."/>
            <person name="Gueldener U."/>
            <person name="Henrissat B."/>
            <person name="Howlett B.J."/>
            <person name="Kodira C."/>
            <person name="Kretschmer M."/>
            <person name="Lappartient A."/>
            <person name="Leroch M."/>
            <person name="Levis C."/>
            <person name="Mauceli E."/>
            <person name="Neuveglise C."/>
            <person name="Oeser B."/>
            <person name="Pearson M."/>
            <person name="Poulain J."/>
            <person name="Poussereau N."/>
            <person name="Quesneville H."/>
            <person name="Rascle C."/>
            <person name="Schumacher J."/>
            <person name="Segurens B."/>
            <person name="Sexton A."/>
            <person name="Silva E."/>
            <person name="Sirven C."/>
            <person name="Soanes D.M."/>
            <person name="Talbot N.J."/>
            <person name="Templeton M."/>
            <person name="Yandava C."/>
            <person name="Yarden O."/>
            <person name="Zeng Q."/>
            <person name="Rollins J.A."/>
            <person name="Lebrun M.-H."/>
            <person name="Dickman M."/>
        </authorList>
    </citation>
    <scope>NUCLEOTIDE SEQUENCE [LARGE SCALE GENOMIC DNA]</scope>
    <source>
        <strain>ATCC 18683 / 1980 / Ss-1</strain>
    </source>
</reference>
<proteinExistence type="inferred from homology"/>
<evidence type="ECO:0000250" key="1">
    <source>
        <dbReference type="UniProtKB" id="P38712"/>
    </source>
</evidence>
<evidence type="ECO:0000255" key="2">
    <source>
        <dbReference type="PROSITE-ProRule" id="PRU00541"/>
    </source>
</evidence>
<evidence type="ECO:0000255" key="3">
    <source>
        <dbReference type="PROSITE-ProRule" id="PRU00542"/>
    </source>
</evidence>
<evidence type="ECO:0000256" key="4">
    <source>
        <dbReference type="SAM" id="MobiDB-lite"/>
    </source>
</evidence>
<evidence type="ECO:0000305" key="5"/>
<keyword id="KW-0067">ATP-binding</keyword>
<keyword id="KW-0347">Helicase</keyword>
<keyword id="KW-0378">Hydrolase</keyword>
<keyword id="KW-0547">Nucleotide-binding</keyword>
<keyword id="KW-0539">Nucleus</keyword>
<keyword id="KW-1185">Reference proteome</keyword>
<keyword id="KW-0690">Ribosome biogenesis</keyword>
<keyword id="KW-0694">RNA-binding</keyword>
<keyword id="KW-0698">rRNA processing</keyword>
<gene>
    <name evidence="1" type="primary">rrp3</name>
    <name type="ORF">SS1G_06567</name>
</gene>
<organism>
    <name type="scientific">Sclerotinia sclerotiorum (strain ATCC 18683 / 1980 / Ss-1)</name>
    <name type="common">White mold</name>
    <name type="synonym">Whetzelinia sclerotiorum</name>
    <dbReference type="NCBI Taxonomy" id="665079"/>
    <lineage>
        <taxon>Eukaryota</taxon>
        <taxon>Fungi</taxon>
        <taxon>Dikarya</taxon>
        <taxon>Ascomycota</taxon>
        <taxon>Pezizomycotina</taxon>
        <taxon>Leotiomycetes</taxon>
        <taxon>Helotiales</taxon>
        <taxon>Sclerotiniaceae</taxon>
        <taxon>Sclerotinia</taxon>
    </lineage>
</organism>
<accession>A7EML8</accession>
<dbReference type="EC" id="3.6.4.13" evidence="1"/>
<dbReference type="EMBL" id="CH476628">
    <property type="protein sequence ID" value="EDO04084.1"/>
    <property type="molecule type" value="Genomic_DNA"/>
</dbReference>
<dbReference type="RefSeq" id="XP_001592326.1">
    <property type="nucleotide sequence ID" value="XM_001592276.1"/>
</dbReference>
<dbReference type="SMR" id="A7EML8"/>
<dbReference type="FunCoup" id="A7EML8">
    <property type="interactions" value="1056"/>
</dbReference>
<dbReference type="STRING" id="665079.A7EML8"/>
<dbReference type="GeneID" id="5488283"/>
<dbReference type="KEGG" id="ssl:SS1G_06567"/>
<dbReference type="VEuPathDB" id="FungiDB:sscle_13g093710"/>
<dbReference type="InParanoid" id="A7EML8"/>
<dbReference type="OMA" id="GIGIKCC"/>
<dbReference type="OrthoDB" id="10261904at2759"/>
<dbReference type="Proteomes" id="UP000001312">
    <property type="component" value="Unassembled WGS sequence"/>
</dbReference>
<dbReference type="GO" id="GO:0005634">
    <property type="term" value="C:nucleus"/>
    <property type="evidence" value="ECO:0000318"/>
    <property type="project" value="GO_Central"/>
</dbReference>
<dbReference type="GO" id="GO:0005524">
    <property type="term" value="F:ATP binding"/>
    <property type="evidence" value="ECO:0007669"/>
    <property type="project" value="UniProtKB-KW"/>
</dbReference>
<dbReference type="GO" id="GO:0016887">
    <property type="term" value="F:ATP hydrolysis activity"/>
    <property type="evidence" value="ECO:0007669"/>
    <property type="project" value="RHEA"/>
</dbReference>
<dbReference type="GO" id="GO:0003723">
    <property type="term" value="F:RNA binding"/>
    <property type="evidence" value="ECO:0007669"/>
    <property type="project" value="UniProtKB-KW"/>
</dbReference>
<dbReference type="GO" id="GO:0003724">
    <property type="term" value="F:RNA helicase activity"/>
    <property type="evidence" value="ECO:0007669"/>
    <property type="project" value="UniProtKB-EC"/>
</dbReference>
<dbReference type="GO" id="GO:0006364">
    <property type="term" value="P:rRNA processing"/>
    <property type="evidence" value="ECO:0000318"/>
    <property type="project" value="GO_Central"/>
</dbReference>
<dbReference type="CDD" id="cd17954">
    <property type="entry name" value="DEADc_DDX47"/>
    <property type="match status" value="1"/>
</dbReference>
<dbReference type="CDD" id="cd18787">
    <property type="entry name" value="SF2_C_DEAD"/>
    <property type="match status" value="1"/>
</dbReference>
<dbReference type="Gene3D" id="3.40.50.300">
    <property type="entry name" value="P-loop containing nucleotide triphosphate hydrolases"/>
    <property type="match status" value="2"/>
</dbReference>
<dbReference type="InterPro" id="IPR044765">
    <property type="entry name" value="DDX47/Rrp3_DEADc"/>
</dbReference>
<dbReference type="InterPro" id="IPR011545">
    <property type="entry name" value="DEAD/DEAH_box_helicase_dom"/>
</dbReference>
<dbReference type="InterPro" id="IPR050079">
    <property type="entry name" value="DEAD_box_RNA_helicase"/>
</dbReference>
<dbReference type="InterPro" id="IPR014001">
    <property type="entry name" value="Helicase_ATP-bd"/>
</dbReference>
<dbReference type="InterPro" id="IPR001650">
    <property type="entry name" value="Helicase_C-like"/>
</dbReference>
<dbReference type="InterPro" id="IPR027417">
    <property type="entry name" value="P-loop_NTPase"/>
</dbReference>
<dbReference type="InterPro" id="IPR000629">
    <property type="entry name" value="RNA-helicase_DEAD-box_CS"/>
</dbReference>
<dbReference type="InterPro" id="IPR014014">
    <property type="entry name" value="RNA_helicase_DEAD_Q_motif"/>
</dbReference>
<dbReference type="PANTHER" id="PTHR47959">
    <property type="entry name" value="ATP-DEPENDENT RNA HELICASE RHLE-RELATED"/>
    <property type="match status" value="1"/>
</dbReference>
<dbReference type="PANTHER" id="PTHR47959:SF20">
    <property type="entry name" value="RNA HELICASE"/>
    <property type="match status" value="1"/>
</dbReference>
<dbReference type="Pfam" id="PF00270">
    <property type="entry name" value="DEAD"/>
    <property type="match status" value="1"/>
</dbReference>
<dbReference type="Pfam" id="PF00271">
    <property type="entry name" value="Helicase_C"/>
    <property type="match status" value="1"/>
</dbReference>
<dbReference type="SMART" id="SM00487">
    <property type="entry name" value="DEXDc"/>
    <property type="match status" value="1"/>
</dbReference>
<dbReference type="SMART" id="SM00490">
    <property type="entry name" value="HELICc"/>
    <property type="match status" value="1"/>
</dbReference>
<dbReference type="SUPFAM" id="SSF52540">
    <property type="entry name" value="P-loop containing nucleoside triphosphate hydrolases"/>
    <property type="match status" value="1"/>
</dbReference>
<dbReference type="PROSITE" id="PS00039">
    <property type="entry name" value="DEAD_ATP_HELICASE"/>
    <property type="match status" value="1"/>
</dbReference>
<dbReference type="PROSITE" id="PS51192">
    <property type="entry name" value="HELICASE_ATP_BIND_1"/>
    <property type="match status" value="1"/>
</dbReference>
<dbReference type="PROSITE" id="PS51194">
    <property type="entry name" value="HELICASE_CTER"/>
    <property type="match status" value="1"/>
</dbReference>
<dbReference type="PROSITE" id="PS51195">
    <property type="entry name" value="Q_MOTIF"/>
    <property type="match status" value="1"/>
</dbReference>
<protein>
    <recommendedName>
        <fullName evidence="5">ATP-dependent rRNA helicase rrp3</fullName>
        <ecNumber evidence="1">3.6.4.13</ecNumber>
    </recommendedName>
</protein>